<dbReference type="EC" id="3.5.4.2" evidence="1"/>
<dbReference type="EMBL" id="AM236080">
    <property type="protein sequence ID" value="CAK05695.1"/>
    <property type="molecule type" value="Genomic_DNA"/>
</dbReference>
<dbReference type="RefSeq" id="WP_011650017.1">
    <property type="nucleotide sequence ID" value="NC_008380.1"/>
</dbReference>
<dbReference type="SMR" id="Q1MMV7"/>
<dbReference type="EnsemblBacteria" id="CAK05695">
    <property type="protein sequence ID" value="CAK05695"/>
    <property type="gene ID" value="RL0206"/>
</dbReference>
<dbReference type="KEGG" id="rle:RL0206"/>
<dbReference type="eggNOG" id="COG1816">
    <property type="taxonomic scope" value="Bacteria"/>
</dbReference>
<dbReference type="HOGENOM" id="CLU_039228_7_1_5"/>
<dbReference type="Proteomes" id="UP000006575">
    <property type="component" value="Chromosome"/>
</dbReference>
<dbReference type="GO" id="GO:0000034">
    <property type="term" value="F:adenine deaminase activity"/>
    <property type="evidence" value="ECO:0007669"/>
    <property type="project" value="UniProtKB-UniRule"/>
</dbReference>
<dbReference type="GO" id="GO:0008270">
    <property type="term" value="F:zinc ion binding"/>
    <property type="evidence" value="ECO:0007669"/>
    <property type="project" value="UniProtKB-UniRule"/>
</dbReference>
<dbReference type="GO" id="GO:0006146">
    <property type="term" value="P:adenine catabolic process"/>
    <property type="evidence" value="ECO:0007669"/>
    <property type="project" value="UniProtKB-UniRule"/>
</dbReference>
<dbReference type="GO" id="GO:0043103">
    <property type="term" value="P:hypoxanthine salvage"/>
    <property type="evidence" value="ECO:0007669"/>
    <property type="project" value="UniProtKB-UniRule"/>
</dbReference>
<dbReference type="GO" id="GO:0009117">
    <property type="term" value="P:nucleotide metabolic process"/>
    <property type="evidence" value="ECO:0007669"/>
    <property type="project" value="UniProtKB-KW"/>
</dbReference>
<dbReference type="CDD" id="cd01320">
    <property type="entry name" value="ADA"/>
    <property type="match status" value="1"/>
</dbReference>
<dbReference type="Gene3D" id="3.20.20.140">
    <property type="entry name" value="Metal-dependent hydrolases"/>
    <property type="match status" value="1"/>
</dbReference>
<dbReference type="HAMAP" id="MF_01962">
    <property type="entry name" value="Adenine_deaminase"/>
    <property type="match status" value="1"/>
</dbReference>
<dbReference type="InterPro" id="IPR001365">
    <property type="entry name" value="A_deaminase_dom"/>
</dbReference>
<dbReference type="InterPro" id="IPR028892">
    <property type="entry name" value="ADE"/>
</dbReference>
<dbReference type="InterPro" id="IPR006330">
    <property type="entry name" value="Ado/ade_deaminase"/>
</dbReference>
<dbReference type="InterPro" id="IPR032466">
    <property type="entry name" value="Metal_Hydrolase"/>
</dbReference>
<dbReference type="NCBIfam" id="TIGR01430">
    <property type="entry name" value="aden_deam"/>
    <property type="match status" value="1"/>
</dbReference>
<dbReference type="NCBIfam" id="NF006848">
    <property type="entry name" value="PRK09358.1-3"/>
    <property type="match status" value="1"/>
</dbReference>
<dbReference type="PANTHER" id="PTHR43114">
    <property type="entry name" value="ADENINE DEAMINASE"/>
    <property type="match status" value="1"/>
</dbReference>
<dbReference type="PANTHER" id="PTHR43114:SF6">
    <property type="entry name" value="ADENINE DEAMINASE"/>
    <property type="match status" value="1"/>
</dbReference>
<dbReference type="Pfam" id="PF00962">
    <property type="entry name" value="A_deaminase"/>
    <property type="match status" value="1"/>
</dbReference>
<dbReference type="SUPFAM" id="SSF51556">
    <property type="entry name" value="Metallo-dependent hydrolases"/>
    <property type="match status" value="1"/>
</dbReference>
<feature type="chain" id="PRO_1000017691" description="Adenine deaminase">
    <location>
        <begin position="1"/>
        <end position="322"/>
    </location>
</feature>
<feature type="active site" description="Proton donor" evidence="1">
    <location>
        <position position="192"/>
    </location>
</feature>
<feature type="binding site" evidence="1">
    <location>
        <position position="11"/>
    </location>
    <ligand>
        <name>Zn(2+)</name>
        <dbReference type="ChEBI" id="CHEBI:29105"/>
        <note>catalytic</note>
    </ligand>
</feature>
<feature type="binding site" evidence="1">
    <location>
        <position position="13"/>
    </location>
    <ligand>
        <name>Zn(2+)</name>
        <dbReference type="ChEBI" id="CHEBI:29105"/>
        <note>catalytic</note>
    </ligand>
</feature>
<feature type="binding site" evidence="1">
    <location>
        <position position="189"/>
    </location>
    <ligand>
        <name>Zn(2+)</name>
        <dbReference type="ChEBI" id="CHEBI:29105"/>
        <note>catalytic</note>
    </ligand>
</feature>
<feature type="binding site" evidence="1">
    <location>
        <position position="270"/>
    </location>
    <ligand>
        <name>Zn(2+)</name>
        <dbReference type="ChEBI" id="CHEBI:29105"/>
        <note>catalytic</note>
    </ligand>
</feature>
<feature type="binding site" evidence="1">
    <location>
        <position position="271"/>
    </location>
    <ligand>
        <name>substrate</name>
    </ligand>
</feature>
<feature type="site" description="Important for catalytic activity" evidence="1">
    <location>
        <position position="213"/>
    </location>
</feature>
<keyword id="KW-0378">Hydrolase</keyword>
<keyword id="KW-0479">Metal-binding</keyword>
<keyword id="KW-0546">Nucleotide metabolism</keyword>
<keyword id="KW-0862">Zinc</keyword>
<evidence type="ECO:0000255" key="1">
    <source>
        <dbReference type="HAMAP-Rule" id="MF_01962"/>
    </source>
</evidence>
<organism>
    <name type="scientific">Rhizobium johnstonii (strain DSM 114642 / LMG 32736 / 3841)</name>
    <name type="common">Rhizobium leguminosarum bv. viciae</name>
    <dbReference type="NCBI Taxonomy" id="216596"/>
    <lineage>
        <taxon>Bacteria</taxon>
        <taxon>Pseudomonadati</taxon>
        <taxon>Pseudomonadota</taxon>
        <taxon>Alphaproteobacteria</taxon>
        <taxon>Hyphomicrobiales</taxon>
        <taxon>Rhizobiaceae</taxon>
        <taxon>Rhizobium/Agrobacterium group</taxon>
        <taxon>Rhizobium</taxon>
        <taxon>Rhizobium johnstonii</taxon>
    </lineage>
</organism>
<gene>
    <name type="ordered locus">RL0206</name>
</gene>
<proteinExistence type="inferred from homology"/>
<reference key="1">
    <citation type="journal article" date="2006" name="Genome Biol.">
        <title>The genome of Rhizobium leguminosarum has recognizable core and accessory components.</title>
        <authorList>
            <person name="Young J.P.W."/>
            <person name="Crossman L.C."/>
            <person name="Johnston A.W.B."/>
            <person name="Thomson N.R."/>
            <person name="Ghazoui Z.F."/>
            <person name="Hull K.H."/>
            <person name="Wexler M."/>
            <person name="Curson A.R.J."/>
            <person name="Todd J.D."/>
            <person name="Poole P.S."/>
            <person name="Mauchline T.H."/>
            <person name="East A.K."/>
            <person name="Quail M.A."/>
            <person name="Churcher C."/>
            <person name="Arrowsmith C."/>
            <person name="Cherevach I."/>
            <person name="Chillingworth T."/>
            <person name="Clarke K."/>
            <person name="Cronin A."/>
            <person name="Davis P."/>
            <person name="Fraser A."/>
            <person name="Hance Z."/>
            <person name="Hauser H."/>
            <person name="Jagels K."/>
            <person name="Moule S."/>
            <person name="Mungall K."/>
            <person name="Norbertczak H."/>
            <person name="Rabbinowitsch E."/>
            <person name="Sanders M."/>
            <person name="Simmonds M."/>
            <person name="Whitehead S."/>
            <person name="Parkhill J."/>
        </authorList>
    </citation>
    <scope>NUCLEOTIDE SEQUENCE [LARGE SCALE GENOMIC DNA]</scope>
    <source>
        <strain>DSM 114642 / LMG 32736 / 3841</strain>
    </source>
</reference>
<protein>
    <recommendedName>
        <fullName evidence="1">Adenine deaminase</fullName>
        <shortName evidence="1">ADE</shortName>
        <ecNumber evidence="1">3.5.4.2</ecNumber>
    </recommendedName>
    <alternativeName>
        <fullName evidence="1">Adenine aminohydrolase</fullName>
        <shortName evidence="1">AAH</shortName>
    </alternativeName>
</protein>
<accession>Q1MMV7</accession>
<name>ADE_RHIJ3</name>
<comment type="function">
    <text evidence="1">Catalyzes the hydrolytic deamination of adenine to hypoxanthine. Plays an important role in the purine salvage pathway and in nitrogen catabolism.</text>
</comment>
<comment type="catalytic activity">
    <reaction evidence="1">
        <text>adenine + H2O + H(+) = hypoxanthine + NH4(+)</text>
        <dbReference type="Rhea" id="RHEA:23688"/>
        <dbReference type="ChEBI" id="CHEBI:15377"/>
        <dbReference type="ChEBI" id="CHEBI:15378"/>
        <dbReference type="ChEBI" id="CHEBI:16708"/>
        <dbReference type="ChEBI" id="CHEBI:17368"/>
        <dbReference type="ChEBI" id="CHEBI:28938"/>
        <dbReference type="EC" id="3.5.4.2"/>
    </reaction>
</comment>
<comment type="cofactor">
    <cofactor evidence="1">
        <name>Zn(2+)</name>
        <dbReference type="ChEBI" id="CHEBI:29105"/>
    </cofactor>
    <text evidence="1">Binds 1 zinc ion per subunit.</text>
</comment>
<comment type="similarity">
    <text evidence="1">Belongs to the metallo-dependent hydrolases superfamily. Adenosine and AMP deaminases family. Adenine deaminase type 2 subfamily.</text>
</comment>
<sequence>MTSHLKKVELHCHLEGAAPPALTAAQARKYGVDISAELRDGAYVWHDFASFLVCYDKVSEVYRTEEDYALLTETYLDELAGIDTIYSELIVSPDHGKRIGLGADAYISGICEGIRRAREKSGIEARLIVTGERHFGPESVIGAAEYAARAANPLITGFNLAGEERMGRVADYARAFDIARDAGLGLTIHAGEVCGAFSVADALDAVRPSRIGHGVRAIEDLDLVTRLADLGTVLEICPGSNIALGVFPDFASHPLRRLKDAGVRVTISSDDPPFFHTSLKREYELAAGTFGFGDAEIDAMTRTAIEAAFVDDETRKALLARI</sequence>